<name>G3P_PLESA</name>
<dbReference type="EC" id="1.2.1.12"/>
<dbReference type="EMBL" id="AF087676">
    <property type="protein sequence ID" value="AAD52091.1"/>
    <property type="molecule type" value="mRNA"/>
</dbReference>
<dbReference type="PIR" id="JC7529">
    <property type="entry name" value="JC7529"/>
</dbReference>
<dbReference type="SMR" id="Q9UW96"/>
<dbReference type="UniPathway" id="UPA00109">
    <property type="reaction ID" value="UER00184"/>
</dbReference>
<dbReference type="GO" id="GO:0005829">
    <property type="term" value="C:cytosol"/>
    <property type="evidence" value="ECO:0007669"/>
    <property type="project" value="TreeGrafter"/>
</dbReference>
<dbReference type="GO" id="GO:0004365">
    <property type="term" value="F:glyceraldehyde-3-phosphate dehydrogenase (NAD+) (phosphorylating) activity"/>
    <property type="evidence" value="ECO:0007669"/>
    <property type="project" value="UniProtKB-EC"/>
</dbReference>
<dbReference type="GO" id="GO:0051287">
    <property type="term" value="F:NAD binding"/>
    <property type="evidence" value="ECO:0007669"/>
    <property type="project" value="InterPro"/>
</dbReference>
<dbReference type="GO" id="GO:0050661">
    <property type="term" value="F:NADP binding"/>
    <property type="evidence" value="ECO:0007669"/>
    <property type="project" value="InterPro"/>
</dbReference>
<dbReference type="GO" id="GO:0006006">
    <property type="term" value="P:glucose metabolic process"/>
    <property type="evidence" value="ECO:0007669"/>
    <property type="project" value="InterPro"/>
</dbReference>
<dbReference type="GO" id="GO:0006096">
    <property type="term" value="P:glycolytic process"/>
    <property type="evidence" value="ECO:0007669"/>
    <property type="project" value="UniProtKB-UniPathway"/>
</dbReference>
<dbReference type="CDD" id="cd18126">
    <property type="entry name" value="GAPDH_I_C"/>
    <property type="match status" value="1"/>
</dbReference>
<dbReference type="CDD" id="cd05214">
    <property type="entry name" value="GAPDH_I_N"/>
    <property type="match status" value="1"/>
</dbReference>
<dbReference type="FunFam" id="3.30.360.10:FF:000001">
    <property type="entry name" value="Glyceraldehyde-3-phosphate dehydrogenase"/>
    <property type="match status" value="1"/>
</dbReference>
<dbReference type="FunFam" id="3.40.50.720:FF:000266">
    <property type="entry name" value="Glyceraldehyde-3-phosphate dehydrogenase"/>
    <property type="match status" value="1"/>
</dbReference>
<dbReference type="Gene3D" id="3.30.360.10">
    <property type="entry name" value="Dihydrodipicolinate Reductase, domain 2"/>
    <property type="match status" value="1"/>
</dbReference>
<dbReference type="Gene3D" id="3.40.50.720">
    <property type="entry name" value="NAD(P)-binding Rossmann-like Domain"/>
    <property type="match status" value="1"/>
</dbReference>
<dbReference type="InterPro" id="IPR020831">
    <property type="entry name" value="GlycerAld/Erythrose_P_DH"/>
</dbReference>
<dbReference type="InterPro" id="IPR020829">
    <property type="entry name" value="GlycerAld_3-P_DH_cat"/>
</dbReference>
<dbReference type="InterPro" id="IPR020828">
    <property type="entry name" value="GlycerAld_3-P_DH_NAD(P)-bd"/>
</dbReference>
<dbReference type="InterPro" id="IPR006424">
    <property type="entry name" value="Glyceraldehyde-3-P_DH_1"/>
</dbReference>
<dbReference type="InterPro" id="IPR036291">
    <property type="entry name" value="NAD(P)-bd_dom_sf"/>
</dbReference>
<dbReference type="NCBIfam" id="TIGR01534">
    <property type="entry name" value="GAPDH-I"/>
    <property type="match status" value="1"/>
</dbReference>
<dbReference type="PANTHER" id="PTHR10836">
    <property type="entry name" value="GLYCERALDEHYDE 3-PHOSPHATE DEHYDROGENASE"/>
    <property type="match status" value="1"/>
</dbReference>
<dbReference type="PANTHER" id="PTHR10836:SF76">
    <property type="entry name" value="GLYCERALDEHYDE-3-PHOSPHATE DEHYDROGENASE-RELATED"/>
    <property type="match status" value="1"/>
</dbReference>
<dbReference type="Pfam" id="PF02800">
    <property type="entry name" value="Gp_dh_C"/>
    <property type="match status" value="1"/>
</dbReference>
<dbReference type="Pfam" id="PF00044">
    <property type="entry name" value="Gp_dh_N"/>
    <property type="match status" value="1"/>
</dbReference>
<dbReference type="PIRSF" id="PIRSF000149">
    <property type="entry name" value="GAP_DH"/>
    <property type="match status" value="1"/>
</dbReference>
<dbReference type="PRINTS" id="PR00078">
    <property type="entry name" value="G3PDHDRGNASE"/>
</dbReference>
<dbReference type="SMART" id="SM00846">
    <property type="entry name" value="Gp_dh_N"/>
    <property type="match status" value="1"/>
</dbReference>
<dbReference type="SUPFAM" id="SSF55347">
    <property type="entry name" value="Glyceraldehyde-3-phosphate dehydrogenase-like, C-terminal domain"/>
    <property type="match status" value="1"/>
</dbReference>
<dbReference type="SUPFAM" id="SSF51735">
    <property type="entry name" value="NAD(P)-binding Rossmann-fold domains"/>
    <property type="match status" value="1"/>
</dbReference>
<gene>
    <name type="primary">GPD</name>
</gene>
<proteinExistence type="evidence at transcript level"/>
<organism>
    <name type="scientific">Pleurotus sajor-caju</name>
    <name type="common">Oyster mushroom</name>
    <dbReference type="NCBI Taxonomy" id="50053"/>
    <lineage>
        <taxon>Eukaryota</taxon>
        <taxon>Fungi</taxon>
        <taxon>Dikarya</taxon>
        <taxon>Basidiomycota</taxon>
        <taxon>Agaricomycotina</taxon>
        <taxon>Agaricomycetes</taxon>
        <taxon>Polyporales</taxon>
        <taxon>Polyporaceae</taxon>
        <taxon>Lentinus</taxon>
    </lineage>
</organism>
<comment type="catalytic activity">
    <reaction>
        <text>D-glyceraldehyde 3-phosphate + phosphate + NAD(+) = (2R)-3-phospho-glyceroyl phosphate + NADH + H(+)</text>
        <dbReference type="Rhea" id="RHEA:10300"/>
        <dbReference type="ChEBI" id="CHEBI:15378"/>
        <dbReference type="ChEBI" id="CHEBI:43474"/>
        <dbReference type="ChEBI" id="CHEBI:57540"/>
        <dbReference type="ChEBI" id="CHEBI:57604"/>
        <dbReference type="ChEBI" id="CHEBI:57945"/>
        <dbReference type="ChEBI" id="CHEBI:59776"/>
        <dbReference type="EC" id="1.2.1.12"/>
    </reaction>
</comment>
<comment type="pathway">
    <text>Carbohydrate degradation; glycolysis; pyruvate from D-glyceraldehyde 3-phosphate: step 1/5.</text>
</comment>
<comment type="subunit">
    <text evidence="1">Homotetramer.</text>
</comment>
<comment type="subcellular location">
    <subcellularLocation>
        <location evidence="1">Cytoplasm</location>
    </subcellularLocation>
</comment>
<comment type="induction">
    <text evidence="2">By salt, cold, heat and drought.</text>
</comment>
<comment type="similarity">
    <text evidence="3">Belongs to the glyceraldehyde-3-phosphate dehydrogenase family.</text>
</comment>
<evidence type="ECO:0000250" key="1"/>
<evidence type="ECO:0000269" key="2">
    <source>
    </source>
</evidence>
<evidence type="ECO:0000305" key="3"/>
<keyword id="KW-0963">Cytoplasm</keyword>
<keyword id="KW-0324">Glycolysis</keyword>
<keyword id="KW-0520">NAD</keyword>
<keyword id="KW-0560">Oxidoreductase</keyword>
<keyword id="KW-0346">Stress response</keyword>
<protein>
    <recommendedName>
        <fullName>Glyceraldehyde-3-phosphate dehydrogenase</fullName>
        <shortName>GAPDH</shortName>
        <ecNumber>1.2.1.12</ecNumber>
    </recommendedName>
</protein>
<sequence>MVNVGINGFGRIGRIVFRNALEVGGVDVVAINDPFIDLDYMVYMFKYDSVHGRFKGSIEAKDGKLIVEGKPIHIFAEKDPANIPWGSVGADYVVESTGVFTTIDKASAHLKGGEKVVISAPSADAPMFVCGVNLETYDPKYKVISNASSTTNCLTPLAKVIHDKFGIVEGLISTIHATTATQKTVDGPSHKDWRGGRSVNNNIIPSSTGAANWVGKVIPSLNGKLTGLSFRVPTLDVSVVDLVVRLEKPADYKEIVAAIKEASETTHKGILGFTSDSVVSTDFVGSTDSSIFDSTAGIQLNPNFVKLIAWYDNEYGYSRRVVDLLKYVAEKDGAQ</sequence>
<feature type="chain" id="PRO_0000145573" description="Glyceraldehyde-3-phosphate dehydrogenase">
    <location>
        <begin position="1"/>
        <end position="335"/>
    </location>
</feature>
<feature type="binding site" evidence="1">
    <location>
        <begin position="11"/>
        <end position="12"/>
    </location>
    <ligand>
        <name>NAD(+)</name>
        <dbReference type="ChEBI" id="CHEBI:57540"/>
    </ligand>
</feature>
<feature type="binding site" evidence="1">
    <location>
        <position position="33"/>
    </location>
    <ligand>
        <name>NAD(+)</name>
        <dbReference type="ChEBI" id="CHEBI:57540"/>
    </ligand>
</feature>
<feature type="binding site" evidence="1">
    <location>
        <position position="78"/>
    </location>
    <ligand>
        <name>NAD(+)</name>
        <dbReference type="ChEBI" id="CHEBI:57540"/>
    </ligand>
</feature>
<feature type="binding site" evidence="1">
    <location>
        <begin position="148"/>
        <end position="150"/>
    </location>
    <ligand>
        <name>D-glyceraldehyde 3-phosphate</name>
        <dbReference type="ChEBI" id="CHEBI:59776"/>
    </ligand>
</feature>
<feature type="binding site" evidence="1">
    <location>
        <position position="179"/>
    </location>
    <ligand>
        <name>D-glyceraldehyde 3-phosphate</name>
        <dbReference type="ChEBI" id="CHEBI:59776"/>
    </ligand>
</feature>
<feature type="binding site" evidence="1">
    <location>
        <begin position="208"/>
        <end position="209"/>
    </location>
    <ligand>
        <name>D-glyceraldehyde 3-phosphate</name>
        <dbReference type="ChEBI" id="CHEBI:59776"/>
    </ligand>
</feature>
<feature type="binding site" evidence="1">
    <location>
        <position position="231"/>
    </location>
    <ligand>
        <name>D-glyceraldehyde 3-phosphate</name>
        <dbReference type="ChEBI" id="CHEBI:59776"/>
    </ligand>
</feature>
<feature type="binding site" evidence="1">
    <location>
        <position position="313"/>
    </location>
    <ligand>
        <name>NAD(+)</name>
        <dbReference type="ChEBI" id="CHEBI:57540"/>
    </ligand>
</feature>
<feature type="site" description="Activates thiol group during catalysis" evidence="1">
    <location>
        <position position="176"/>
    </location>
</feature>
<accession>Q9UW96</accession>
<reference key="1">
    <citation type="journal article" date="2000" name="Biochem. Biophys. Res. Commun.">
        <title>Isolation and characterization of the gene encoding glyceraldehyde-3-phosphate dehydrogenase.</title>
        <authorList>
            <person name="Jeong M.-J."/>
            <person name="Park S.-C."/>
            <person name="Kwon H.-B."/>
            <person name="Byun M.-O."/>
        </authorList>
    </citation>
    <scope>NUCLEOTIDE SEQUENCE [MRNA]</scope>
    <scope>INDUCTION</scope>
    <source>
        <strain>ASI2070</strain>
        <tissue>Mycelium</tissue>
    </source>
</reference>